<dbReference type="EMBL" id="CP000884">
    <property type="protein sequence ID" value="ABX33678.1"/>
    <property type="molecule type" value="Genomic_DNA"/>
</dbReference>
<dbReference type="RefSeq" id="WP_012202964.1">
    <property type="nucleotide sequence ID" value="NC_010002.1"/>
</dbReference>
<dbReference type="SMR" id="A9BRW1"/>
<dbReference type="STRING" id="398578.Daci_1032"/>
<dbReference type="GeneID" id="24115517"/>
<dbReference type="KEGG" id="dac:Daci_1032"/>
<dbReference type="eggNOG" id="COG0093">
    <property type="taxonomic scope" value="Bacteria"/>
</dbReference>
<dbReference type="HOGENOM" id="CLU_095071_2_1_4"/>
<dbReference type="Proteomes" id="UP000000784">
    <property type="component" value="Chromosome"/>
</dbReference>
<dbReference type="GO" id="GO:0022625">
    <property type="term" value="C:cytosolic large ribosomal subunit"/>
    <property type="evidence" value="ECO:0007669"/>
    <property type="project" value="TreeGrafter"/>
</dbReference>
<dbReference type="GO" id="GO:0070180">
    <property type="term" value="F:large ribosomal subunit rRNA binding"/>
    <property type="evidence" value="ECO:0007669"/>
    <property type="project" value="TreeGrafter"/>
</dbReference>
<dbReference type="GO" id="GO:0003735">
    <property type="term" value="F:structural constituent of ribosome"/>
    <property type="evidence" value="ECO:0007669"/>
    <property type="project" value="InterPro"/>
</dbReference>
<dbReference type="GO" id="GO:0006412">
    <property type="term" value="P:translation"/>
    <property type="evidence" value="ECO:0007669"/>
    <property type="project" value="UniProtKB-UniRule"/>
</dbReference>
<dbReference type="CDD" id="cd00337">
    <property type="entry name" value="Ribosomal_uL14"/>
    <property type="match status" value="1"/>
</dbReference>
<dbReference type="FunFam" id="2.40.150.20:FF:000001">
    <property type="entry name" value="50S ribosomal protein L14"/>
    <property type="match status" value="1"/>
</dbReference>
<dbReference type="Gene3D" id="2.40.150.20">
    <property type="entry name" value="Ribosomal protein L14"/>
    <property type="match status" value="1"/>
</dbReference>
<dbReference type="HAMAP" id="MF_01367">
    <property type="entry name" value="Ribosomal_uL14"/>
    <property type="match status" value="1"/>
</dbReference>
<dbReference type="InterPro" id="IPR000218">
    <property type="entry name" value="Ribosomal_uL14"/>
</dbReference>
<dbReference type="InterPro" id="IPR005745">
    <property type="entry name" value="Ribosomal_uL14_bac-type"/>
</dbReference>
<dbReference type="InterPro" id="IPR019972">
    <property type="entry name" value="Ribosomal_uL14_CS"/>
</dbReference>
<dbReference type="InterPro" id="IPR036853">
    <property type="entry name" value="Ribosomal_uL14_sf"/>
</dbReference>
<dbReference type="NCBIfam" id="TIGR01067">
    <property type="entry name" value="rplN_bact"/>
    <property type="match status" value="1"/>
</dbReference>
<dbReference type="PANTHER" id="PTHR11761">
    <property type="entry name" value="50S/60S RIBOSOMAL PROTEIN L14/L23"/>
    <property type="match status" value="1"/>
</dbReference>
<dbReference type="PANTHER" id="PTHR11761:SF3">
    <property type="entry name" value="LARGE RIBOSOMAL SUBUNIT PROTEIN UL14M"/>
    <property type="match status" value="1"/>
</dbReference>
<dbReference type="Pfam" id="PF00238">
    <property type="entry name" value="Ribosomal_L14"/>
    <property type="match status" value="1"/>
</dbReference>
<dbReference type="SMART" id="SM01374">
    <property type="entry name" value="Ribosomal_L14"/>
    <property type="match status" value="1"/>
</dbReference>
<dbReference type="SUPFAM" id="SSF50193">
    <property type="entry name" value="Ribosomal protein L14"/>
    <property type="match status" value="1"/>
</dbReference>
<dbReference type="PROSITE" id="PS00049">
    <property type="entry name" value="RIBOSOMAL_L14"/>
    <property type="match status" value="1"/>
</dbReference>
<feature type="chain" id="PRO_1000144255" description="Large ribosomal subunit protein uL14">
    <location>
        <begin position="1"/>
        <end position="122"/>
    </location>
</feature>
<sequence>MIQTESRLEVADNTGAKSVQCIKVLGGSHRRYASVGDIIKVTIKEAAPRGRVKKGEVYSAVVVRTAKGIRRADGSLVKFDGNAAVLLNAKLEPIGTRIFGPVTRELRNEKFMKIVSLAPEVL</sequence>
<gene>
    <name evidence="1" type="primary">rplN</name>
    <name type="ordered locus">Daci_1032</name>
</gene>
<reference key="1">
    <citation type="submission" date="2007-11" db="EMBL/GenBank/DDBJ databases">
        <title>Complete sequence of Delftia acidovorans DSM 14801 / SPH-1.</title>
        <authorList>
            <person name="Copeland A."/>
            <person name="Lucas S."/>
            <person name="Lapidus A."/>
            <person name="Barry K."/>
            <person name="Glavina del Rio T."/>
            <person name="Dalin E."/>
            <person name="Tice H."/>
            <person name="Pitluck S."/>
            <person name="Lowry S."/>
            <person name="Clum A."/>
            <person name="Schmutz J."/>
            <person name="Larimer F."/>
            <person name="Land M."/>
            <person name="Hauser L."/>
            <person name="Kyrpides N."/>
            <person name="Kim E."/>
            <person name="Schleheck D."/>
            <person name="Richardson P."/>
        </authorList>
    </citation>
    <scope>NUCLEOTIDE SEQUENCE [LARGE SCALE GENOMIC DNA]</scope>
    <source>
        <strain>DSM 14801 / SPH-1</strain>
    </source>
</reference>
<comment type="function">
    <text evidence="1">Binds to 23S rRNA. Forms part of two intersubunit bridges in the 70S ribosome.</text>
</comment>
<comment type="subunit">
    <text evidence="1">Part of the 50S ribosomal subunit. Forms a cluster with proteins L3 and L19. In the 70S ribosome, L14 and L19 interact and together make contacts with the 16S rRNA in bridges B5 and B8.</text>
</comment>
<comment type="similarity">
    <text evidence="1">Belongs to the universal ribosomal protein uL14 family.</text>
</comment>
<accession>A9BRW1</accession>
<name>RL14_DELAS</name>
<organism>
    <name type="scientific">Delftia acidovorans (strain DSM 14801 / SPH-1)</name>
    <dbReference type="NCBI Taxonomy" id="398578"/>
    <lineage>
        <taxon>Bacteria</taxon>
        <taxon>Pseudomonadati</taxon>
        <taxon>Pseudomonadota</taxon>
        <taxon>Betaproteobacteria</taxon>
        <taxon>Burkholderiales</taxon>
        <taxon>Comamonadaceae</taxon>
        <taxon>Delftia</taxon>
    </lineage>
</organism>
<proteinExistence type="inferred from homology"/>
<evidence type="ECO:0000255" key="1">
    <source>
        <dbReference type="HAMAP-Rule" id="MF_01367"/>
    </source>
</evidence>
<evidence type="ECO:0000305" key="2"/>
<protein>
    <recommendedName>
        <fullName evidence="1">Large ribosomal subunit protein uL14</fullName>
    </recommendedName>
    <alternativeName>
        <fullName evidence="2">50S ribosomal protein L14</fullName>
    </alternativeName>
</protein>
<keyword id="KW-1185">Reference proteome</keyword>
<keyword id="KW-0687">Ribonucleoprotein</keyword>
<keyword id="KW-0689">Ribosomal protein</keyword>
<keyword id="KW-0694">RNA-binding</keyword>
<keyword id="KW-0699">rRNA-binding</keyword>